<proteinExistence type="inferred from homology"/>
<accession>Q6GA69</accession>
<evidence type="ECO:0000250" key="1"/>
<evidence type="ECO:0000255" key="2">
    <source>
        <dbReference type="PROSITE-ProRule" id="PRU00691"/>
    </source>
</evidence>
<evidence type="ECO:0000305" key="3"/>
<gene>
    <name type="primary">trxA</name>
    <name type="ordered locus">SAS1079</name>
</gene>
<dbReference type="EMBL" id="BX571857">
    <property type="protein sequence ID" value="CAG42854.1"/>
    <property type="molecule type" value="Genomic_DNA"/>
</dbReference>
<dbReference type="RefSeq" id="WP_001018928.1">
    <property type="nucleotide sequence ID" value="NC_002953.3"/>
</dbReference>
<dbReference type="SMR" id="Q6GA69"/>
<dbReference type="GeneID" id="98345462"/>
<dbReference type="KEGG" id="sas:SAS1079"/>
<dbReference type="HOGENOM" id="CLU_090389_10_2_9"/>
<dbReference type="GO" id="GO:0005829">
    <property type="term" value="C:cytosol"/>
    <property type="evidence" value="ECO:0007669"/>
    <property type="project" value="TreeGrafter"/>
</dbReference>
<dbReference type="GO" id="GO:0015035">
    <property type="term" value="F:protein-disulfide reductase activity"/>
    <property type="evidence" value="ECO:0007669"/>
    <property type="project" value="InterPro"/>
</dbReference>
<dbReference type="GO" id="GO:0045454">
    <property type="term" value="P:cell redox homeostasis"/>
    <property type="evidence" value="ECO:0007669"/>
    <property type="project" value="TreeGrafter"/>
</dbReference>
<dbReference type="CDD" id="cd02947">
    <property type="entry name" value="TRX_family"/>
    <property type="match status" value="1"/>
</dbReference>
<dbReference type="FunFam" id="3.40.30.10:FF:000001">
    <property type="entry name" value="Thioredoxin"/>
    <property type="match status" value="1"/>
</dbReference>
<dbReference type="Gene3D" id="3.40.30.10">
    <property type="entry name" value="Glutaredoxin"/>
    <property type="match status" value="1"/>
</dbReference>
<dbReference type="InterPro" id="IPR005746">
    <property type="entry name" value="Thioredoxin"/>
</dbReference>
<dbReference type="InterPro" id="IPR036249">
    <property type="entry name" value="Thioredoxin-like_sf"/>
</dbReference>
<dbReference type="InterPro" id="IPR017937">
    <property type="entry name" value="Thioredoxin_CS"/>
</dbReference>
<dbReference type="InterPro" id="IPR013766">
    <property type="entry name" value="Thioredoxin_domain"/>
</dbReference>
<dbReference type="NCBIfam" id="TIGR01068">
    <property type="entry name" value="thioredoxin"/>
    <property type="match status" value="1"/>
</dbReference>
<dbReference type="PANTHER" id="PTHR45663">
    <property type="entry name" value="GEO12009P1"/>
    <property type="match status" value="1"/>
</dbReference>
<dbReference type="PANTHER" id="PTHR45663:SF11">
    <property type="entry name" value="GEO12009P1"/>
    <property type="match status" value="1"/>
</dbReference>
<dbReference type="Pfam" id="PF00085">
    <property type="entry name" value="Thioredoxin"/>
    <property type="match status" value="1"/>
</dbReference>
<dbReference type="PIRSF" id="PIRSF000077">
    <property type="entry name" value="Thioredoxin"/>
    <property type="match status" value="1"/>
</dbReference>
<dbReference type="PRINTS" id="PR00421">
    <property type="entry name" value="THIOREDOXIN"/>
</dbReference>
<dbReference type="SUPFAM" id="SSF52833">
    <property type="entry name" value="Thioredoxin-like"/>
    <property type="match status" value="1"/>
</dbReference>
<dbReference type="PROSITE" id="PS00194">
    <property type="entry name" value="THIOREDOXIN_1"/>
    <property type="match status" value="1"/>
</dbReference>
<dbReference type="PROSITE" id="PS51352">
    <property type="entry name" value="THIOREDOXIN_2"/>
    <property type="match status" value="1"/>
</dbReference>
<sequence>MAIVKVTDADFDSKVESGVQLVDFWATWCGPCKMIAPVLEELAADYEGKADILKLDVDENPSTAAKYEVMSIPTLIVFKDGQPVDKVVGFQPKENLAEVLDKHL</sequence>
<feature type="chain" id="PRO_0000120129" description="Thioredoxin">
    <location>
        <begin position="1"/>
        <end position="104"/>
    </location>
</feature>
<feature type="domain" description="Thioredoxin" evidence="2">
    <location>
        <begin position="2"/>
        <end position="104"/>
    </location>
</feature>
<feature type="disulfide bond" description="Redox-active" evidence="2">
    <location>
        <begin position="29"/>
        <end position="32"/>
    </location>
</feature>
<organism>
    <name type="scientific">Staphylococcus aureus (strain MSSA476)</name>
    <dbReference type="NCBI Taxonomy" id="282459"/>
    <lineage>
        <taxon>Bacteria</taxon>
        <taxon>Bacillati</taxon>
        <taxon>Bacillota</taxon>
        <taxon>Bacilli</taxon>
        <taxon>Bacillales</taxon>
        <taxon>Staphylococcaceae</taxon>
        <taxon>Staphylococcus</taxon>
    </lineage>
</organism>
<keyword id="KW-1015">Disulfide bond</keyword>
<keyword id="KW-0249">Electron transport</keyword>
<keyword id="KW-0676">Redox-active center</keyword>
<keyword id="KW-0813">Transport</keyword>
<protein>
    <recommendedName>
        <fullName>Thioredoxin</fullName>
        <shortName>Trx</shortName>
    </recommendedName>
</protein>
<reference key="1">
    <citation type="journal article" date="2004" name="Proc. Natl. Acad. Sci. U.S.A.">
        <title>Complete genomes of two clinical Staphylococcus aureus strains: evidence for the rapid evolution of virulence and drug resistance.</title>
        <authorList>
            <person name="Holden M.T.G."/>
            <person name="Feil E.J."/>
            <person name="Lindsay J.A."/>
            <person name="Peacock S.J."/>
            <person name="Day N.P.J."/>
            <person name="Enright M.C."/>
            <person name="Foster T.J."/>
            <person name="Moore C.E."/>
            <person name="Hurst L."/>
            <person name="Atkin R."/>
            <person name="Barron A."/>
            <person name="Bason N."/>
            <person name="Bentley S.D."/>
            <person name="Chillingworth C."/>
            <person name="Chillingworth T."/>
            <person name="Churcher C."/>
            <person name="Clark L."/>
            <person name="Corton C."/>
            <person name="Cronin A."/>
            <person name="Doggett J."/>
            <person name="Dowd L."/>
            <person name="Feltwell T."/>
            <person name="Hance Z."/>
            <person name="Harris B."/>
            <person name="Hauser H."/>
            <person name="Holroyd S."/>
            <person name="Jagels K."/>
            <person name="James K.D."/>
            <person name="Lennard N."/>
            <person name="Line A."/>
            <person name="Mayes R."/>
            <person name="Moule S."/>
            <person name="Mungall K."/>
            <person name="Ormond D."/>
            <person name="Quail M.A."/>
            <person name="Rabbinowitsch E."/>
            <person name="Rutherford K.M."/>
            <person name="Sanders M."/>
            <person name="Sharp S."/>
            <person name="Simmonds M."/>
            <person name="Stevens K."/>
            <person name="Whitehead S."/>
            <person name="Barrell B.G."/>
            <person name="Spratt B.G."/>
            <person name="Parkhill J."/>
        </authorList>
    </citation>
    <scope>NUCLEOTIDE SEQUENCE [LARGE SCALE GENOMIC DNA]</scope>
    <source>
        <strain>MSSA476</strain>
    </source>
</reference>
<name>THIO_STAAS</name>
<comment type="function">
    <text evidence="1">Component of the thioredoxin-thioredoxin reductase system. Participates in various redox reactions through the reversible oxidation of its active center dithiol to a disulfide and catalyzes dithiol-disulfide exchange reactions (By similarity).</text>
</comment>
<comment type="similarity">
    <text evidence="3">Belongs to the thioredoxin family.</text>
</comment>